<name>Y2629_MYCTO</name>
<keyword id="KW-0175">Coiled coil</keyword>
<keyword id="KW-1185">Reference proteome</keyword>
<sequence length="374" mass="40840">MRSERLRWLVAAEGPFASVYFDDSHDTLDAVERREATWRDVRKHLESRDAKQELIDSLEEAVRDSRPAVGQRGRALIATGEQVLVNEHLIGPPPATVIRLSDYPYVVPLIDLEMRRPTYVFAAVDHTGADVKLYQGATISSTKIDGVGYPVHKPVTAGWNGYGDFQHTTEEAIRMNCRAVADHLTRLVDAADPEVVFVSGEVRSRTDLLSTLPQRVAVRVSQLHAGPRKSALDEEEIWDLTSAEFTRRRYAEITNVAQQFEAEIGRGSGLAAQGLAEVCAALRDGDVDTLIVGELGEATVVTGKARTTVARDADMLSELGEPVDRVARADEALPFAAIAVGAALVRDDNRIAPLDGVGALLRYAATNRLGSHRS</sequence>
<organism>
    <name type="scientific">Mycobacterium tuberculosis (strain CDC 1551 / Oshkosh)</name>
    <dbReference type="NCBI Taxonomy" id="83331"/>
    <lineage>
        <taxon>Bacteria</taxon>
        <taxon>Bacillati</taxon>
        <taxon>Actinomycetota</taxon>
        <taxon>Actinomycetes</taxon>
        <taxon>Mycobacteriales</taxon>
        <taxon>Mycobacteriaceae</taxon>
        <taxon>Mycobacterium</taxon>
        <taxon>Mycobacterium tuberculosis complex</taxon>
    </lineage>
</organism>
<gene>
    <name type="ordered locus">MT2704</name>
</gene>
<protein>
    <recommendedName>
        <fullName>Uncharacterized protein MT2704</fullName>
    </recommendedName>
</protein>
<evidence type="ECO:0000255" key="1"/>
<evidence type="ECO:0000269" key="2">
    <source>
    </source>
</evidence>
<reference key="1">
    <citation type="journal article" date="2002" name="J. Bacteriol.">
        <title>Whole-genome comparison of Mycobacterium tuberculosis clinical and laboratory strains.</title>
        <authorList>
            <person name="Fleischmann R.D."/>
            <person name="Alland D."/>
            <person name="Eisen J.A."/>
            <person name="Carpenter L."/>
            <person name="White O."/>
            <person name="Peterson J.D."/>
            <person name="DeBoy R.T."/>
            <person name="Dodson R.J."/>
            <person name="Gwinn M.L."/>
            <person name="Haft D.H."/>
            <person name="Hickey E.K."/>
            <person name="Kolonay J.F."/>
            <person name="Nelson W.C."/>
            <person name="Umayam L.A."/>
            <person name="Ermolaeva M.D."/>
            <person name="Salzberg S.L."/>
            <person name="Delcher A."/>
            <person name="Utterback T.R."/>
            <person name="Weidman J.F."/>
            <person name="Khouri H.M."/>
            <person name="Gill J."/>
            <person name="Mikula A."/>
            <person name="Bishai W."/>
            <person name="Jacobs W.R. Jr."/>
            <person name="Venter J.C."/>
            <person name="Fraser C.M."/>
        </authorList>
    </citation>
    <scope>NUCLEOTIDE SEQUENCE [LARGE SCALE GENOMIC DNA]</scope>
    <source>
        <strain>CDC 1551 / Oshkosh</strain>
    </source>
</reference>
<reference key="2">
    <citation type="journal article" date="2003" name="J. Exp. Med.">
        <title>Inhibition of respiration by nitric oxide induces a Mycobacterium tuberculosis dormancy program.</title>
        <authorList>
            <person name="Voskuil M.I."/>
            <person name="Schnappinger D."/>
            <person name="Visconti K.C."/>
            <person name="Harrell M.I."/>
            <person name="Dolganov G.M."/>
            <person name="Sherman D.R."/>
            <person name="Schoolnik G.K."/>
        </authorList>
    </citation>
    <scope>INDUCTION BY NITRIC OXIDE (NO) AND BY HYPOXIA</scope>
    <scope>DORMANCY REGULON</scope>
    <source>
        <strain>CDC 1551 / Oshkosh</strain>
    </source>
</reference>
<proteinExistence type="evidence at transcript level"/>
<dbReference type="EMBL" id="AE000516">
    <property type="protein sequence ID" value="AAK47020.1"/>
    <property type="molecule type" value="Genomic_DNA"/>
</dbReference>
<dbReference type="PIR" id="D70573">
    <property type="entry name" value="D70573"/>
</dbReference>
<dbReference type="RefSeq" id="WP_003413610.1">
    <property type="nucleotide sequence ID" value="NZ_KK341227.1"/>
</dbReference>
<dbReference type="SMR" id="P9WL62"/>
<dbReference type="KEGG" id="mtc:MT2704"/>
<dbReference type="PATRIC" id="fig|83331.31.peg.2916"/>
<dbReference type="HOGENOM" id="CLU_054531_0_0_11"/>
<dbReference type="Proteomes" id="UP000001020">
    <property type="component" value="Chromosome"/>
</dbReference>
<dbReference type="Gene3D" id="3.30.1330.30">
    <property type="match status" value="1"/>
</dbReference>
<dbReference type="InterPro" id="IPR040701">
    <property type="entry name" value="Bact_RF_family2"/>
</dbReference>
<dbReference type="InterPro" id="IPR029064">
    <property type="entry name" value="Ribosomal_eL30-like_sf"/>
</dbReference>
<dbReference type="Pfam" id="PF18844">
    <property type="entry name" value="baeRF_family2"/>
    <property type="match status" value="1"/>
</dbReference>
<dbReference type="SUPFAM" id="SSF55315">
    <property type="entry name" value="L30e-like"/>
    <property type="match status" value="1"/>
</dbReference>
<comment type="induction">
    <text evidence="2">A member of the dormancy regulon. Induced in response to reduced oxygen tension (hypoxia) and low levels of nitric oxide (NO).</text>
</comment>
<accession>P9WL62</accession>
<accession>L0TD40</accession>
<accession>O06183</accession>
<accession>Q7D6V1</accession>
<feature type="chain" id="PRO_0000427534" description="Uncharacterized protein MT2704">
    <location>
        <begin position="1"/>
        <end position="374"/>
    </location>
</feature>
<feature type="coiled-coil region" evidence="1">
    <location>
        <begin position="39"/>
        <end position="66"/>
    </location>
</feature>